<organism evidence="10">
    <name type="scientific">Caenorhabditis elegans</name>
    <dbReference type="NCBI Taxonomy" id="6239"/>
    <lineage>
        <taxon>Eukaryota</taxon>
        <taxon>Metazoa</taxon>
        <taxon>Ecdysozoa</taxon>
        <taxon>Nematoda</taxon>
        <taxon>Chromadorea</taxon>
        <taxon>Rhabditida</taxon>
        <taxon>Rhabditina</taxon>
        <taxon>Rhabditomorpha</taxon>
        <taxon>Rhabditoidea</taxon>
        <taxon>Rhabditidae</taxon>
        <taxon>Peloderinae</taxon>
        <taxon>Caenorhabditis</taxon>
    </lineage>
</organism>
<evidence type="ECO:0000255" key="1"/>
<evidence type="ECO:0000255" key="2">
    <source>
        <dbReference type="PROSITE-ProRule" id="PRU00081"/>
    </source>
</evidence>
<evidence type="ECO:0000255" key="3">
    <source>
        <dbReference type="PROSITE-ProRule" id="PRU00159"/>
    </source>
</evidence>
<evidence type="ECO:0000255" key="4">
    <source>
        <dbReference type="PROSITE-ProRule" id="PRU00498"/>
    </source>
</evidence>
<evidence type="ECO:0000256" key="5">
    <source>
        <dbReference type="SAM" id="MobiDB-lite"/>
    </source>
</evidence>
<evidence type="ECO:0000269" key="6">
    <source>
    </source>
</evidence>
<evidence type="ECO:0000269" key="7">
    <source>
    </source>
</evidence>
<evidence type="ECO:0000303" key="8">
    <source>
    </source>
</evidence>
<evidence type="ECO:0000305" key="9"/>
<evidence type="ECO:0000312" key="10">
    <source>
        <dbReference type="Proteomes" id="UP000001940"/>
    </source>
</evidence>
<evidence type="ECO:0000312" key="11">
    <source>
        <dbReference type="WormBase" id="C25F6.4"/>
    </source>
</evidence>
<name>DDRA_CAEEL</name>
<proteinExistence type="evidence at transcript level"/>
<feature type="signal peptide" evidence="1">
    <location>
        <begin position="1"/>
        <end position="18"/>
    </location>
</feature>
<feature type="chain" id="PRO_0000434038" description="Discoidin domain-containing receptor A" evidence="9">
    <location>
        <begin position="19"/>
        <end position="766"/>
    </location>
</feature>
<feature type="topological domain" description="Extracellular" evidence="1">
    <location>
        <begin position="19"/>
        <end position="372"/>
    </location>
</feature>
<feature type="transmembrane region" description="Helical" evidence="1">
    <location>
        <begin position="373"/>
        <end position="393"/>
    </location>
</feature>
<feature type="topological domain" description="Cytoplasmic" evidence="1">
    <location>
        <begin position="394"/>
        <end position="766"/>
    </location>
</feature>
<feature type="domain" description="F5/8 type C 1" evidence="2">
    <location>
        <begin position="24"/>
        <end position="180"/>
    </location>
</feature>
<feature type="domain" description="F5/8 type C 2" evidence="2">
    <location>
        <begin position="195"/>
        <end position="351"/>
    </location>
</feature>
<feature type="domain" description="Protein kinase" evidence="3">
    <location>
        <begin position="519"/>
        <end position="766"/>
    </location>
</feature>
<feature type="region of interest" description="Disordered" evidence="5">
    <location>
        <begin position="475"/>
        <end position="501"/>
    </location>
</feature>
<feature type="compositionally biased region" description="Polar residues" evidence="5">
    <location>
        <begin position="488"/>
        <end position="501"/>
    </location>
</feature>
<feature type="binding site" evidence="3">
    <location>
        <begin position="525"/>
        <end position="533"/>
    </location>
    <ligand>
        <name>ATP</name>
        <dbReference type="ChEBI" id="CHEBI:30616"/>
    </ligand>
</feature>
<feature type="binding site" evidence="3">
    <location>
        <position position="547"/>
    </location>
    <ligand>
        <name>ATP</name>
        <dbReference type="ChEBI" id="CHEBI:30616"/>
    </ligand>
</feature>
<feature type="glycosylation site" description="N-linked (GlcNAc...) asparagine" evidence="4">
    <location>
        <position position="87"/>
    </location>
</feature>
<feature type="glycosylation site" description="N-linked (GlcNAc...) asparagine" evidence="4">
    <location>
        <position position="103"/>
    </location>
</feature>
<feature type="glycosylation site" description="N-linked (GlcNAc...) asparagine" evidence="4">
    <location>
        <position position="129"/>
    </location>
</feature>
<feature type="glycosylation site" description="N-linked (GlcNAc...) asparagine" evidence="4">
    <location>
        <position position="242"/>
    </location>
</feature>
<feature type="glycosylation site" description="N-linked (GlcNAc...) asparagine" evidence="4">
    <location>
        <position position="268"/>
    </location>
</feature>
<feature type="glycosylation site" description="N-linked (GlcNAc...) asparagine" evidence="4">
    <location>
        <position position="311"/>
    </location>
</feature>
<feature type="glycosylation site" description="N-linked (GlcNAc...) asparagine" evidence="4">
    <location>
        <position position="353"/>
    </location>
</feature>
<feature type="disulfide bond" evidence="2">
    <location>
        <begin position="24"/>
        <end position="180"/>
    </location>
</feature>
<keyword id="KW-0067">ATP-binding</keyword>
<keyword id="KW-1003">Cell membrane</keyword>
<keyword id="KW-0966">Cell projection</keyword>
<keyword id="KW-1015">Disulfide bond</keyword>
<keyword id="KW-0325">Glycoprotein</keyword>
<keyword id="KW-0472">Membrane</keyword>
<keyword id="KW-0524">Neurogenesis</keyword>
<keyword id="KW-0547">Nucleotide-binding</keyword>
<keyword id="KW-0675">Receptor</keyword>
<keyword id="KW-1185">Reference proteome</keyword>
<keyword id="KW-0677">Repeat</keyword>
<keyword id="KW-0732">Signal</keyword>
<keyword id="KW-0812">Transmembrane</keyword>
<keyword id="KW-1133">Transmembrane helix</keyword>
<sequence>MQIALVLLAIYGTTTTNTLRIDQCGENALGMQNGDIADSQITASSSFDKQSVGPQNARLHSELASGAWCPKPQINSKSYEFLQVTLNDTFLITSVETQGRYGNGTGREFASHYMIDYLRPGSQWIRYKNRTGHVYMDGNFDTTTPVIRVLDPPIVASRIRFVPSSKNTRTVCMRAEIHGCKHEGVTYYSTVPDGSRLDTLDFKDSMFEDSQIYTESGIKRGLGLLTDGFVAQASPFEKNQMNNSWIGWNRDTTDGRITILFEFEEVHNFTDVVLATFGNRIDGIDVIFSQDGKTFPLFSQISSSERQSLNNTSRRYDFRVPLHNRAGRKVRISIKFSSDWMFLTEVHFTSAANLTLLSEKIPPPSSAATQQLLVVCGIIFLTIFACVAYCVSVCLKRRQKNKSVDSNVKKDLIITHMGNKPTCHVFPSNGKLSNGHYEVANDILYARSQKSTLLSVSSKSTFSCRAIPPTWTDFNFPPPPEGREEHTYSQPVSPENSSNGSYKSVRKIQALKKYPSSALLIGKAIGEGKFTMIKECIIFGGLKCAHKSTKEEDCVHGTRALGDEIACLLQCGRHPRIVELFGVDESYNLLLEHVEYGCIRNFWMASEAPLDTEFLVRICKDIYSAMAYLESIRIVHGHFTPNNILMDGEFHAKVCSPRGPSHHAQLRYSAPESIVNNEFTHKSDAWAVATTVYEMAYQCRQRPYEELTNEQIVDNACALLDHQPNAVVPLMPTVFNYEILQLLTRCFRVDQLERPTFERLVKPFQD</sequence>
<dbReference type="EMBL" id="BX284606">
    <property type="protein sequence ID" value="CCD65687.1"/>
    <property type="molecule type" value="Genomic_DNA"/>
</dbReference>
<dbReference type="RefSeq" id="NP_508926.2">
    <property type="nucleotide sequence ID" value="NM_076525.5"/>
</dbReference>
<dbReference type="SMR" id="Q18163"/>
<dbReference type="FunCoup" id="Q18163">
    <property type="interactions" value="6"/>
</dbReference>
<dbReference type="STRING" id="6239.C25F6.4.1"/>
<dbReference type="GlyCosmos" id="Q18163">
    <property type="glycosylation" value="7 sites, No reported glycans"/>
</dbReference>
<dbReference type="PaxDb" id="6239-C25F6.4"/>
<dbReference type="EnsemblMetazoa" id="C25F6.4.1">
    <property type="protein sequence ID" value="C25F6.4.1"/>
    <property type="gene ID" value="WBGene00016104"/>
</dbReference>
<dbReference type="GeneID" id="180817"/>
<dbReference type="KEGG" id="cel:CELE_C25F6.4"/>
<dbReference type="UCSC" id="C25F6.4">
    <property type="organism name" value="c. elegans"/>
</dbReference>
<dbReference type="AGR" id="WB:WBGene00016104"/>
<dbReference type="CTD" id="180817"/>
<dbReference type="WormBase" id="C25F6.4">
    <property type="protein sequence ID" value="CE45027"/>
    <property type="gene ID" value="WBGene00016104"/>
    <property type="gene designation" value="ddr-1"/>
</dbReference>
<dbReference type="eggNOG" id="KOG1094">
    <property type="taxonomic scope" value="Eukaryota"/>
</dbReference>
<dbReference type="GeneTree" id="ENSGT00970000196593"/>
<dbReference type="HOGENOM" id="CLU_008873_1_0_1"/>
<dbReference type="InParanoid" id="Q18163"/>
<dbReference type="OMA" id="VNNEFTH"/>
<dbReference type="OrthoDB" id="6071166at2759"/>
<dbReference type="PhylomeDB" id="Q18163"/>
<dbReference type="PRO" id="PR:Q18163"/>
<dbReference type="Proteomes" id="UP000001940">
    <property type="component" value="Chromosome X"/>
</dbReference>
<dbReference type="Bgee" id="WBGene00016104">
    <property type="expression patterns" value="Expressed in pharyngeal muscle cell (C elegans) and 3 other cell types or tissues"/>
</dbReference>
<dbReference type="GO" id="GO:0030424">
    <property type="term" value="C:axon"/>
    <property type="evidence" value="ECO:0007669"/>
    <property type="project" value="UniProtKB-SubCell"/>
</dbReference>
<dbReference type="GO" id="GO:0043204">
    <property type="term" value="C:perikaryon"/>
    <property type="evidence" value="ECO:0007669"/>
    <property type="project" value="UniProtKB-SubCell"/>
</dbReference>
<dbReference type="GO" id="GO:0005886">
    <property type="term" value="C:plasma membrane"/>
    <property type="evidence" value="ECO:0000318"/>
    <property type="project" value="GO_Central"/>
</dbReference>
<dbReference type="GO" id="GO:0005524">
    <property type="term" value="F:ATP binding"/>
    <property type="evidence" value="ECO:0007669"/>
    <property type="project" value="UniProtKB-KW"/>
</dbReference>
<dbReference type="GO" id="GO:0004715">
    <property type="term" value="F:non-membrane spanning protein tyrosine kinase activity"/>
    <property type="evidence" value="ECO:0000318"/>
    <property type="project" value="GO_Central"/>
</dbReference>
<dbReference type="GO" id="GO:0005102">
    <property type="term" value="F:signaling receptor binding"/>
    <property type="evidence" value="ECO:0000318"/>
    <property type="project" value="GO_Central"/>
</dbReference>
<dbReference type="GO" id="GO:0030154">
    <property type="term" value="P:cell differentiation"/>
    <property type="evidence" value="ECO:0000318"/>
    <property type="project" value="GO_Central"/>
</dbReference>
<dbReference type="GO" id="GO:0007169">
    <property type="term" value="P:cell surface receptor protein tyrosine kinase signaling pathway"/>
    <property type="evidence" value="ECO:0000318"/>
    <property type="project" value="GO_Central"/>
</dbReference>
<dbReference type="GO" id="GO:0008045">
    <property type="term" value="P:motor neuron axon guidance"/>
    <property type="evidence" value="ECO:0000316"/>
    <property type="project" value="UniProtKB"/>
</dbReference>
<dbReference type="GO" id="GO:0048680">
    <property type="term" value="P:positive regulation of axon regeneration"/>
    <property type="evidence" value="ECO:0000316"/>
    <property type="project" value="UniProtKB"/>
</dbReference>
<dbReference type="CDD" id="cd00057">
    <property type="entry name" value="FA58C"/>
    <property type="match status" value="1"/>
</dbReference>
<dbReference type="FunFam" id="2.60.120.260:FF:000007">
    <property type="entry name" value="Discoidin domain receptor tyrosine kinase 1"/>
    <property type="match status" value="1"/>
</dbReference>
<dbReference type="Gene3D" id="2.60.120.1190">
    <property type="match status" value="1"/>
</dbReference>
<dbReference type="Gene3D" id="2.60.120.260">
    <property type="entry name" value="Galactose-binding domain-like"/>
    <property type="match status" value="1"/>
</dbReference>
<dbReference type="Gene3D" id="3.30.200.20">
    <property type="entry name" value="Phosphorylase Kinase, domain 1"/>
    <property type="match status" value="1"/>
</dbReference>
<dbReference type="Gene3D" id="1.10.510.10">
    <property type="entry name" value="Transferase(Phosphotransferase) domain 1"/>
    <property type="match status" value="1"/>
</dbReference>
<dbReference type="InterPro" id="IPR048525">
    <property type="entry name" value="DDR1-2_DS-like"/>
</dbReference>
<dbReference type="InterPro" id="IPR000421">
    <property type="entry name" value="FA58C"/>
</dbReference>
<dbReference type="InterPro" id="IPR008979">
    <property type="entry name" value="Galactose-bd-like_sf"/>
</dbReference>
<dbReference type="InterPro" id="IPR011009">
    <property type="entry name" value="Kinase-like_dom_sf"/>
</dbReference>
<dbReference type="InterPro" id="IPR000719">
    <property type="entry name" value="Prot_kinase_dom"/>
</dbReference>
<dbReference type="InterPro" id="IPR050122">
    <property type="entry name" value="RTK"/>
</dbReference>
<dbReference type="InterPro" id="IPR001245">
    <property type="entry name" value="Ser-Thr/Tyr_kinase_cat_dom"/>
</dbReference>
<dbReference type="PANTHER" id="PTHR24416:SF489">
    <property type="entry name" value="PROTEIN KINASE DOMAIN-CONTAINING PROTEIN"/>
    <property type="match status" value="1"/>
</dbReference>
<dbReference type="PANTHER" id="PTHR24416">
    <property type="entry name" value="TYROSINE-PROTEIN KINASE RECEPTOR"/>
    <property type="match status" value="1"/>
</dbReference>
<dbReference type="Pfam" id="PF21114">
    <property type="entry name" value="DDR1-2_DS-like"/>
    <property type="match status" value="1"/>
</dbReference>
<dbReference type="Pfam" id="PF00754">
    <property type="entry name" value="F5_F8_type_C"/>
    <property type="match status" value="1"/>
</dbReference>
<dbReference type="Pfam" id="PF07714">
    <property type="entry name" value="PK_Tyr_Ser-Thr"/>
    <property type="match status" value="1"/>
</dbReference>
<dbReference type="SMART" id="SM00231">
    <property type="entry name" value="FA58C"/>
    <property type="match status" value="1"/>
</dbReference>
<dbReference type="SUPFAM" id="SSF49785">
    <property type="entry name" value="Galactose-binding domain-like"/>
    <property type="match status" value="1"/>
</dbReference>
<dbReference type="SUPFAM" id="SSF56112">
    <property type="entry name" value="Protein kinase-like (PK-like)"/>
    <property type="match status" value="1"/>
</dbReference>
<dbReference type="PROSITE" id="PS01285">
    <property type="entry name" value="FA58C_1"/>
    <property type="match status" value="1"/>
</dbReference>
<dbReference type="PROSITE" id="PS01286">
    <property type="entry name" value="FA58C_2"/>
    <property type="match status" value="1"/>
</dbReference>
<dbReference type="PROSITE" id="PS50022">
    <property type="entry name" value="FA58C_3"/>
    <property type="match status" value="2"/>
</dbReference>
<dbReference type="PROSITE" id="PS50011">
    <property type="entry name" value="PROTEIN_KINASE_DOM"/>
    <property type="match status" value="1"/>
</dbReference>
<accession>Q18163</accession>
<protein>
    <recommendedName>
        <fullName evidence="8">Discoidin domain-containing receptor A</fullName>
    </recommendedName>
</protein>
<gene>
    <name evidence="11" type="primary">ddr-1</name>
    <name evidence="11" type="ORF">C25F6.4</name>
</gene>
<comment type="function">
    <text evidence="6 7">Receptor which, together with svh-4, is involved in axon guidance to establish the tracts for the ventral and dorsal nerve cords during nervous system development (PubMed:23147028). May play a role in axon regeneration following injury in D-type motor neurons (PubMed:27984580).</text>
</comment>
<comment type="subcellular location">
    <subcellularLocation>
        <location evidence="9">Cell membrane</location>
        <topology evidence="9">Single-pass type I membrane protein</topology>
    </subcellularLocation>
    <subcellularLocation>
        <location evidence="6">Cell projection</location>
        <location evidence="6">Axon</location>
    </subcellularLocation>
    <subcellularLocation>
        <location evidence="6">Perikaryon</location>
    </subcellularLocation>
</comment>
<comment type="tissue specificity">
    <text evidence="6">Expressed in neurons in head and tail, some motoneurons in ventral nerve cord, in PVP interneurons, pharynx and stomato-intestinal muscle.</text>
</comment>
<comment type="developmental stage">
    <text evidence="6">Expression begins during bean stage in hypodermal cells. At the 2-fold stage, also expressed in a few head and tail neurons.</text>
</comment>
<comment type="domain">
    <text evidence="3">The protein kinase domain is predicted to be catalytically inactive.</text>
</comment>
<comment type="disruption phenotype">
    <text evidence="7">Viable. No effect on axon regeneration 24 hours following injury of D-type motor neurons. Double knockout with svh-4 results in a more enhanced axon regeneration defect of D-type motor neurons as compared to the svh-4 single mutant.</text>
</comment>
<comment type="similarity">
    <text evidence="9">Belongs to the protein kinase superfamily. Tyr protein kinase family. Insulin receptor subfamily.</text>
</comment>
<reference evidence="10" key="1">
    <citation type="journal article" date="1998" name="Science">
        <title>Genome sequence of the nematode C. elegans: a platform for investigating biology.</title>
        <authorList>
            <consortium name="The C. elegans sequencing consortium"/>
        </authorList>
    </citation>
    <scope>NUCLEOTIDE SEQUENCE [LARGE SCALE GENOMIC DNA]</scope>
    <source>
        <strain evidence="10">Bristol N2</strain>
    </source>
</reference>
<reference evidence="9" key="2">
    <citation type="journal article" date="2013" name="Dev. Biol.">
        <title>Discoidin domain receptors guide axons along longitudinal tracts in C. elegans.</title>
        <authorList>
            <person name="Unsoeld T."/>
            <person name="Park J.O."/>
            <person name="Hutter H."/>
        </authorList>
    </citation>
    <scope>FUNCTION</scope>
    <scope>SUBCELLULAR LOCATION</scope>
    <scope>TISSUE SPECIFICITY</scope>
    <scope>DEVELOPMENTAL STAGE</scope>
</reference>
<reference key="3">
    <citation type="journal article" date="2016" name="PLoS Genet.">
        <title>The C. elegans discoidin domain receptor DDR-2 modulates the Met-like RTK-JNK signaling pathway in axon regeneration.</title>
        <authorList>
            <person name="Hisamoto N."/>
            <person name="Nagamori Y."/>
            <person name="Shimizu T."/>
            <person name="Pastuhov S.I."/>
            <person name="Matsumoto K."/>
        </authorList>
    </citation>
    <scope>FUNCTION</scope>
    <scope>DISRUPTION PHENOTYPE</scope>
</reference>